<feature type="chain" id="PRO_0000314377" description="Carboxy-S-adenosyl-L-methionine synthase">
    <location>
        <begin position="1"/>
        <end position="243"/>
    </location>
</feature>
<feature type="binding site" evidence="1">
    <location>
        <position position="40"/>
    </location>
    <ligand>
        <name>S-adenosyl-L-methionine</name>
        <dbReference type="ChEBI" id="CHEBI:59789"/>
    </ligand>
</feature>
<feature type="binding site" evidence="1">
    <location>
        <begin position="65"/>
        <end position="67"/>
    </location>
    <ligand>
        <name>S-adenosyl-L-methionine</name>
        <dbReference type="ChEBI" id="CHEBI:59789"/>
    </ligand>
</feature>
<feature type="binding site" evidence="1">
    <location>
        <begin position="90"/>
        <end position="91"/>
    </location>
    <ligand>
        <name>S-adenosyl-L-methionine</name>
        <dbReference type="ChEBI" id="CHEBI:59789"/>
    </ligand>
</feature>
<feature type="binding site" evidence="1">
    <location>
        <begin position="118"/>
        <end position="119"/>
    </location>
    <ligand>
        <name>S-adenosyl-L-methionine</name>
        <dbReference type="ChEBI" id="CHEBI:59789"/>
    </ligand>
</feature>
<feature type="binding site" evidence="1">
    <location>
        <position position="133"/>
    </location>
    <ligand>
        <name>S-adenosyl-L-methionine</name>
        <dbReference type="ChEBI" id="CHEBI:59789"/>
    </ligand>
</feature>
<feature type="binding site" evidence="1">
    <location>
        <position position="200"/>
    </location>
    <ligand>
        <name>S-adenosyl-L-methionine</name>
        <dbReference type="ChEBI" id="CHEBI:59789"/>
    </ligand>
</feature>
<protein>
    <recommendedName>
        <fullName evidence="1">Carboxy-S-adenosyl-L-methionine synthase</fullName>
        <shortName evidence="1">Cx-SAM synthase</shortName>
        <ecNumber evidence="1">2.1.3.-</ecNumber>
    </recommendedName>
</protein>
<dbReference type="EC" id="2.1.3.-" evidence="1"/>
<dbReference type="EMBL" id="CP000753">
    <property type="protein sequence ID" value="ABS08447.1"/>
    <property type="molecule type" value="Genomic_DNA"/>
</dbReference>
<dbReference type="RefSeq" id="WP_006081747.1">
    <property type="nucleotide sequence ID" value="NC_009665.1"/>
</dbReference>
<dbReference type="SMR" id="A6WNQ8"/>
<dbReference type="GeneID" id="11772542"/>
<dbReference type="KEGG" id="sbm:Shew185_2309"/>
<dbReference type="HOGENOM" id="CLU_078475_0_0_6"/>
<dbReference type="GO" id="GO:0016743">
    <property type="term" value="F:carboxyl- or carbamoyltransferase activity"/>
    <property type="evidence" value="ECO:0007669"/>
    <property type="project" value="UniProtKB-UniRule"/>
</dbReference>
<dbReference type="GO" id="GO:1904047">
    <property type="term" value="F:S-adenosyl-L-methionine binding"/>
    <property type="evidence" value="ECO:0007669"/>
    <property type="project" value="UniProtKB-UniRule"/>
</dbReference>
<dbReference type="GO" id="GO:0002098">
    <property type="term" value="P:tRNA wobble uridine modification"/>
    <property type="evidence" value="ECO:0007669"/>
    <property type="project" value="InterPro"/>
</dbReference>
<dbReference type="CDD" id="cd02440">
    <property type="entry name" value="AdoMet_MTases"/>
    <property type="match status" value="1"/>
</dbReference>
<dbReference type="Gene3D" id="3.40.50.150">
    <property type="entry name" value="Vaccinia Virus protein VP39"/>
    <property type="match status" value="1"/>
</dbReference>
<dbReference type="HAMAP" id="MF_01589">
    <property type="entry name" value="Cx_SAM_synthase"/>
    <property type="match status" value="1"/>
</dbReference>
<dbReference type="InterPro" id="IPR005271">
    <property type="entry name" value="CmoA"/>
</dbReference>
<dbReference type="InterPro" id="IPR041698">
    <property type="entry name" value="Methyltransf_25"/>
</dbReference>
<dbReference type="InterPro" id="IPR029063">
    <property type="entry name" value="SAM-dependent_MTases_sf"/>
</dbReference>
<dbReference type="NCBIfam" id="TIGR00740">
    <property type="entry name" value="carboxy-S-adenosyl-L-methionine synthase CmoA"/>
    <property type="match status" value="1"/>
</dbReference>
<dbReference type="NCBIfam" id="NF011995">
    <property type="entry name" value="PRK15451.1"/>
    <property type="match status" value="1"/>
</dbReference>
<dbReference type="PANTHER" id="PTHR43861:SF2">
    <property type="entry name" value="CARBOXY-S-ADENOSYL-L-METHIONINE SYNTHASE"/>
    <property type="match status" value="1"/>
</dbReference>
<dbReference type="PANTHER" id="PTHR43861">
    <property type="entry name" value="TRANS-ACONITATE 2-METHYLTRANSFERASE-RELATED"/>
    <property type="match status" value="1"/>
</dbReference>
<dbReference type="Pfam" id="PF13649">
    <property type="entry name" value="Methyltransf_25"/>
    <property type="match status" value="1"/>
</dbReference>
<dbReference type="PIRSF" id="PIRSF006325">
    <property type="entry name" value="MeTrfase_bac"/>
    <property type="match status" value="1"/>
</dbReference>
<dbReference type="SUPFAM" id="SSF53335">
    <property type="entry name" value="S-adenosyl-L-methionine-dependent methyltransferases"/>
    <property type="match status" value="1"/>
</dbReference>
<organism>
    <name type="scientific">Shewanella baltica (strain OS185)</name>
    <dbReference type="NCBI Taxonomy" id="402882"/>
    <lineage>
        <taxon>Bacteria</taxon>
        <taxon>Pseudomonadati</taxon>
        <taxon>Pseudomonadota</taxon>
        <taxon>Gammaproteobacteria</taxon>
        <taxon>Alteromonadales</taxon>
        <taxon>Shewanellaceae</taxon>
        <taxon>Shewanella</taxon>
    </lineage>
</organism>
<name>CMOA_SHEB8</name>
<evidence type="ECO:0000255" key="1">
    <source>
        <dbReference type="HAMAP-Rule" id="MF_01589"/>
    </source>
</evidence>
<comment type="function">
    <text evidence="1">Catalyzes the conversion of S-adenosyl-L-methionine (SAM) to carboxy-S-adenosyl-L-methionine (Cx-SAM).</text>
</comment>
<comment type="catalytic activity">
    <reaction evidence="1">
        <text>prephenate + S-adenosyl-L-methionine = carboxy-S-adenosyl-L-methionine + 3-phenylpyruvate + H2O</text>
        <dbReference type="Rhea" id="RHEA:51692"/>
        <dbReference type="ChEBI" id="CHEBI:15377"/>
        <dbReference type="ChEBI" id="CHEBI:18005"/>
        <dbReference type="ChEBI" id="CHEBI:29934"/>
        <dbReference type="ChEBI" id="CHEBI:59789"/>
        <dbReference type="ChEBI" id="CHEBI:134278"/>
    </reaction>
</comment>
<comment type="subunit">
    <text evidence="1">Homodimer.</text>
</comment>
<comment type="similarity">
    <text evidence="1">Belongs to the class I-like SAM-binding methyltransferase superfamily. Cx-SAM synthase family.</text>
</comment>
<sequence length="243" mass="27456">MNVSQDTIYAQASEHISDFQFDNRVAGVFSDMIRRSVPGYTQIINTIGDFADRFVMPNTQIYDLGCSLGAATLSIRRQIQGRQCRIIAVDNSESMVARCQENLNAYVSDTDVDLVCGDIRDIDIQNASLVVLNFTLQFLPPEDRETLIAKIYQGLNPGGILVLSEKIRFEDAPIQTLLEEQHLDFKRANGYSELEISQKRSALENVMKPDTLTTHQQRLTSQGFSHFSLWFQCFNFASMVAIK</sequence>
<reference key="1">
    <citation type="submission" date="2007-07" db="EMBL/GenBank/DDBJ databases">
        <title>Complete sequence of chromosome of Shewanella baltica OS185.</title>
        <authorList>
            <consortium name="US DOE Joint Genome Institute"/>
            <person name="Copeland A."/>
            <person name="Lucas S."/>
            <person name="Lapidus A."/>
            <person name="Barry K."/>
            <person name="Glavina del Rio T."/>
            <person name="Dalin E."/>
            <person name="Tice H."/>
            <person name="Pitluck S."/>
            <person name="Sims D."/>
            <person name="Brettin T."/>
            <person name="Bruce D."/>
            <person name="Detter J.C."/>
            <person name="Han C."/>
            <person name="Schmutz J."/>
            <person name="Larimer F."/>
            <person name="Land M."/>
            <person name="Hauser L."/>
            <person name="Kyrpides N."/>
            <person name="Mikhailova N."/>
            <person name="Brettar I."/>
            <person name="Rodrigues J."/>
            <person name="Konstantinidis K."/>
            <person name="Tiedje J."/>
            <person name="Richardson P."/>
        </authorList>
    </citation>
    <scope>NUCLEOTIDE SEQUENCE [LARGE SCALE GENOMIC DNA]</scope>
    <source>
        <strain>OS185</strain>
    </source>
</reference>
<gene>
    <name evidence="1" type="primary">cmoA</name>
    <name type="ordered locus">Shew185_2309</name>
</gene>
<keyword id="KW-0949">S-adenosyl-L-methionine</keyword>
<keyword id="KW-0808">Transferase</keyword>
<accession>A6WNQ8</accession>
<proteinExistence type="inferred from homology"/>